<keyword id="KW-0963">Cytoplasm</keyword>
<keyword id="KW-0378">Hydrolase</keyword>
<keyword id="KW-0479">Metal-binding</keyword>
<keyword id="KW-0547">Nucleotide-binding</keyword>
<proteinExistence type="inferred from homology"/>
<sequence>MKQSHFFAHLSRMKLINRWPLMRNVRTENVSEHSLQVAMVAHALAAIKNRKFGGQLNAERIALLAMYHDASEVLTGDLPTPVKYFNSQIAQEYKAIEKIAQQKLVDMAPDELRDIFAPLIDENAWSEEEQAIVKQADALCAYLKCLEELSAGNNEFGLAKTRLEKTLELRRSQEMDYFMAVFVPSFHLSLDEISQDSPL</sequence>
<name>5DNU_SALNS</name>
<protein>
    <recommendedName>
        <fullName evidence="1">5'-deoxynucleotidase YfbR</fullName>
        <ecNumber evidence="1">3.1.3.89</ecNumber>
    </recommendedName>
    <alternativeName>
        <fullName evidence="1">5'-deoxyribonucleotidase</fullName>
    </alternativeName>
    <alternativeName>
        <fullName evidence="1">Nucleoside 5'-monophosphate phosphohydrolase</fullName>
    </alternativeName>
</protein>
<reference key="1">
    <citation type="journal article" date="2011" name="J. Bacteriol.">
        <title>Comparative genomics of 28 Salmonella enterica isolates: evidence for CRISPR-mediated adaptive sublineage evolution.</title>
        <authorList>
            <person name="Fricke W.F."/>
            <person name="Mammel M.K."/>
            <person name="McDermott P.F."/>
            <person name="Tartera C."/>
            <person name="White D.G."/>
            <person name="Leclerc J.E."/>
            <person name="Ravel J."/>
            <person name="Cebula T.A."/>
        </authorList>
    </citation>
    <scope>NUCLEOTIDE SEQUENCE [LARGE SCALE GENOMIC DNA]</scope>
    <source>
        <strain>SL254</strain>
    </source>
</reference>
<feature type="chain" id="PRO_1000136976" description="5'-deoxynucleotidase YfbR">
    <location>
        <begin position="1"/>
        <end position="199"/>
    </location>
</feature>
<feature type="domain" description="HD" evidence="2">
    <location>
        <begin position="30"/>
        <end position="142"/>
    </location>
</feature>
<feature type="binding site" evidence="1">
    <location>
        <begin position="18"/>
        <end position="19"/>
    </location>
    <ligand>
        <name>substrate</name>
    </ligand>
</feature>
<feature type="binding site" evidence="1">
    <location>
        <position position="33"/>
    </location>
    <ligand>
        <name>a divalent metal cation</name>
        <dbReference type="ChEBI" id="CHEBI:60240"/>
    </ligand>
</feature>
<feature type="binding site" evidence="1">
    <location>
        <position position="33"/>
    </location>
    <ligand>
        <name>substrate</name>
    </ligand>
</feature>
<feature type="binding site" evidence="1">
    <location>
        <position position="68"/>
    </location>
    <ligand>
        <name>a divalent metal cation</name>
        <dbReference type="ChEBI" id="CHEBI:60240"/>
    </ligand>
</feature>
<feature type="binding site" evidence="1">
    <location>
        <position position="69"/>
    </location>
    <ligand>
        <name>a divalent metal cation</name>
        <dbReference type="ChEBI" id="CHEBI:60240"/>
    </ligand>
</feature>
<feature type="binding site" evidence="1">
    <location>
        <position position="69"/>
    </location>
    <ligand>
        <name>substrate</name>
    </ligand>
</feature>
<feature type="binding site" evidence="1">
    <location>
        <begin position="77"/>
        <end position="80"/>
    </location>
    <ligand>
        <name>substrate</name>
    </ligand>
</feature>
<feature type="binding site" evidence="1">
    <location>
        <position position="137"/>
    </location>
    <ligand>
        <name>a divalent metal cation</name>
        <dbReference type="ChEBI" id="CHEBI:60240"/>
    </ligand>
</feature>
<feature type="binding site" evidence="1">
    <location>
        <position position="137"/>
    </location>
    <ligand>
        <name>substrate</name>
    </ligand>
</feature>
<feature type="site" description="Appears to be important in orienting the phosphate for catalysis" evidence="1">
    <location>
        <position position="18"/>
    </location>
</feature>
<evidence type="ECO:0000255" key="1">
    <source>
        <dbReference type="HAMAP-Rule" id="MF_01100"/>
    </source>
</evidence>
<evidence type="ECO:0000255" key="2">
    <source>
        <dbReference type="PROSITE-ProRule" id="PRU01175"/>
    </source>
</evidence>
<comment type="function">
    <text evidence="1">Catalyzes the strictly specific dephosphorylation of 2'-deoxyribonucleoside 5'-monophosphates.</text>
</comment>
<comment type="catalytic activity">
    <reaction evidence="1">
        <text>a 2'-deoxyribonucleoside 5'-phosphate + H2O = a 2'-deoxyribonucleoside + phosphate</text>
        <dbReference type="Rhea" id="RHEA:36167"/>
        <dbReference type="ChEBI" id="CHEBI:15377"/>
        <dbReference type="ChEBI" id="CHEBI:18274"/>
        <dbReference type="ChEBI" id="CHEBI:43474"/>
        <dbReference type="ChEBI" id="CHEBI:65317"/>
        <dbReference type="EC" id="3.1.3.89"/>
    </reaction>
</comment>
<comment type="cofactor">
    <cofactor evidence="1">
        <name>a divalent metal cation</name>
        <dbReference type="ChEBI" id="CHEBI:60240"/>
    </cofactor>
</comment>
<comment type="subunit">
    <text evidence="1">Homodimer.</text>
</comment>
<comment type="subcellular location">
    <subcellularLocation>
        <location evidence="1">Cytoplasm</location>
    </subcellularLocation>
</comment>
<comment type="similarity">
    <text evidence="1">Belongs to the 5DNU family.</text>
</comment>
<organism>
    <name type="scientific">Salmonella newport (strain SL254)</name>
    <dbReference type="NCBI Taxonomy" id="423368"/>
    <lineage>
        <taxon>Bacteria</taxon>
        <taxon>Pseudomonadati</taxon>
        <taxon>Pseudomonadota</taxon>
        <taxon>Gammaproteobacteria</taxon>
        <taxon>Enterobacterales</taxon>
        <taxon>Enterobacteriaceae</taxon>
        <taxon>Salmonella</taxon>
    </lineage>
</organism>
<accession>B4SZ04</accession>
<dbReference type="EC" id="3.1.3.89" evidence="1"/>
<dbReference type="EMBL" id="CP001113">
    <property type="protein sequence ID" value="ACF61479.1"/>
    <property type="molecule type" value="Genomic_DNA"/>
</dbReference>
<dbReference type="RefSeq" id="WP_000813882.1">
    <property type="nucleotide sequence ID" value="NZ_CCMR01000001.1"/>
</dbReference>
<dbReference type="SMR" id="B4SZ04"/>
<dbReference type="KEGG" id="see:SNSL254_A2517"/>
<dbReference type="HOGENOM" id="CLU_084784_0_0_6"/>
<dbReference type="Proteomes" id="UP000008824">
    <property type="component" value="Chromosome"/>
</dbReference>
<dbReference type="GO" id="GO:0005737">
    <property type="term" value="C:cytoplasm"/>
    <property type="evidence" value="ECO:0007669"/>
    <property type="project" value="UniProtKB-SubCell"/>
</dbReference>
<dbReference type="GO" id="GO:0002953">
    <property type="term" value="F:5'-deoxynucleotidase activity"/>
    <property type="evidence" value="ECO:0007669"/>
    <property type="project" value="UniProtKB-EC"/>
</dbReference>
<dbReference type="GO" id="GO:0046872">
    <property type="term" value="F:metal ion binding"/>
    <property type="evidence" value="ECO:0007669"/>
    <property type="project" value="UniProtKB-KW"/>
</dbReference>
<dbReference type="GO" id="GO:0000166">
    <property type="term" value="F:nucleotide binding"/>
    <property type="evidence" value="ECO:0007669"/>
    <property type="project" value="UniProtKB-KW"/>
</dbReference>
<dbReference type="FunFam" id="1.10.3210.10:FF:000002">
    <property type="entry name" value="Nucleotidase YfbR"/>
    <property type="match status" value="1"/>
</dbReference>
<dbReference type="Gene3D" id="1.10.3210.10">
    <property type="entry name" value="Hypothetical protein af1432"/>
    <property type="match status" value="1"/>
</dbReference>
<dbReference type="HAMAP" id="MF_01100">
    <property type="entry name" value="5DNU"/>
    <property type="match status" value="1"/>
</dbReference>
<dbReference type="InterPro" id="IPR003607">
    <property type="entry name" value="HD/PDEase_dom"/>
</dbReference>
<dbReference type="InterPro" id="IPR006674">
    <property type="entry name" value="HD_domain"/>
</dbReference>
<dbReference type="InterPro" id="IPR022971">
    <property type="entry name" value="YfbR"/>
</dbReference>
<dbReference type="InterPro" id="IPR039356">
    <property type="entry name" value="YfbR/HDDC2"/>
</dbReference>
<dbReference type="NCBIfam" id="NF003009">
    <property type="entry name" value="PRK03826.1"/>
    <property type="match status" value="1"/>
</dbReference>
<dbReference type="PANTHER" id="PTHR11845">
    <property type="entry name" value="5'-DEOXYNUCLEOTIDASE HDDC2"/>
    <property type="match status" value="1"/>
</dbReference>
<dbReference type="PANTHER" id="PTHR11845:SF13">
    <property type="entry name" value="5'-DEOXYNUCLEOTIDASE HDDC2"/>
    <property type="match status" value="1"/>
</dbReference>
<dbReference type="Pfam" id="PF12917">
    <property type="entry name" value="YfbR-like"/>
    <property type="match status" value="1"/>
</dbReference>
<dbReference type="SMART" id="SM00471">
    <property type="entry name" value="HDc"/>
    <property type="match status" value="1"/>
</dbReference>
<dbReference type="SUPFAM" id="SSF109604">
    <property type="entry name" value="HD-domain/PDEase-like"/>
    <property type="match status" value="1"/>
</dbReference>
<dbReference type="PROSITE" id="PS51831">
    <property type="entry name" value="HD"/>
    <property type="match status" value="1"/>
</dbReference>
<gene>
    <name evidence="1" type="primary">yfbR</name>
    <name type="ordered locus">SNSL254_A2517</name>
</gene>